<feature type="chain" id="PRO_0000381128" description="8-amino-7-oxononanoate synthase">
    <location>
        <begin position="1"/>
        <end position="386"/>
    </location>
</feature>
<feature type="binding site" evidence="1">
    <location>
        <position position="23"/>
    </location>
    <ligand>
        <name>substrate</name>
    </ligand>
</feature>
<feature type="binding site" evidence="1">
    <location>
        <begin position="110"/>
        <end position="111"/>
    </location>
    <ligand>
        <name>pyridoxal 5'-phosphate</name>
        <dbReference type="ChEBI" id="CHEBI:597326"/>
    </ligand>
</feature>
<feature type="binding site" evidence="1">
    <location>
        <position position="135"/>
    </location>
    <ligand>
        <name>substrate</name>
    </ligand>
</feature>
<feature type="binding site" evidence="1">
    <location>
        <position position="181"/>
    </location>
    <ligand>
        <name>pyridoxal 5'-phosphate</name>
        <dbReference type="ChEBI" id="CHEBI:597326"/>
    </ligand>
</feature>
<feature type="binding site" evidence="1">
    <location>
        <position position="209"/>
    </location>
    <ligand>
        <name>pyridoxal 5'-phosphate</name>
        <dbReference type="ChEBI" id="CHEBI:597326"/>
    </ligand>
</feature>
<feature type="binding site" evidence="1">
    <location>
        <position position="236"/>
    </location>
    <ligand>
        <name>pyridoxal 5'-phosphate</name>
        <dbReference type="ChEBI" id="CHEBI:597326"/>
    </ligand>
</feature>
<feature type="binding site" evidence="1">
    <location>
        <position position="354"/>
    </location>
    <ligand>
        <name>substrate</name>
    </ligand>
</feature>
<feature type="modified residue" description="N6-(pyridoxal phosphate)lysine" evidence="1">
    <location>
        <position position="239"/>
    </location>
</feature>
<comment type="function">
    <text evidence="1">Catalyzes the decarboxylative condensation of pimeloyl-[acyl-carrier protein] and L-alanine to produce 8-amino-7-oxononanoate (AON), [acyl-carrier protein], and carbon dioxide.</text>
</comment>
<comment type="catalytic activity">
    <reaction evidence="1">
        <text>6-carboxyhexanoyl-[ACP] + L-alanine + H(+) = (8S)-8-amino-7-oxononanoate + holo-[ACP] + CO2</text>
        <dbReference type="Rhea" id="RHEA:42288"/>
        <dbReference type="Rhea" id="RHEA-COMP:9685"/>
        <dbReference type="Rhea" id="RHEA-COMP:9955"/>
        <dbReference type="ChEBI" id="CHEBI:15378"/>
        <dbReference type="ChEBI" id="CHEBI:16526"/>
        <dbReference type="ChEBI" id="CHEBI:57972"/>
        <dbReference type="ChEBI" id="CHEBI:64479"/>
        <dbReference type="ChEBI" id="CHEBI:78846"/>
        <dbReference type="ChEBI" id="CHEBI:149468"/>
        <dbReference type="EC" id="2.3.1.47"/>
    </reaction>
</comment>
<comment type="cofactor">
    <cofactor evidence="1">
        <name>pyridoxal 5'-phosphate</name>
        <dbReference type="ChEBI" id="CHEBI:597326"/>
    </cofactor>
</comment>
<comment type="pathway">
    <text evidence="1">Cofactor biosynthesis; biotin biosynthesis.</text>
</comment>
<comment type="subunit">
    <text evidence="1">Homodimer.</text>
</comment>
<comment type="similarity">
    <text evidence="1">Belongs to the class-II pyridoxal-phosphate-dependent aminotransferase family. BioF subfamily.</text>
</comment>
<name>BIOF_THIDA</name>
<keyword id="KW-0093">Biotin biosynthesis</keyword>
<keyword id="KW-0663">Pyridoxal phosphate</keyword>
<keyword id="KW-1185">Reference proteome</keyword>
<keyword id="KW-0808">Transferase</keyword>
<organism>
    <name type="scientific">Thiobacillus denitrificans (strain ATCC 25259 / T1)</name>
    <dbReference type="NCBI Taxonomy" id="292415"/>
    <lineage>
        <taxon>Bacteria</taxon>
        <taxon>Pseudomonadati</taxon>
        <taxon>Pseudomonadota</taxon>
        <taxon>Betaproteobacteria</taxon>
        <taxon>Nitrosomonadales</taxon>
        <taxon>Thiobacillaceae</taxon>
        <taxon>Thiobacillus</taxon>
    </lineage>
</organism>
<accession>Q3SLX9</accession>
<dbReference type="EC" id="2.3.1.47" evidence="1"/>
<dbReference type="EMBL" id="CP000116">
    <property type="protein sequence ID" value="AAZ96273.1"/>
    <property type="molecule type" value="Genomic_DNA"/>
</dbReference>
<dbReference type="RefSeq" id="WP_011310833.1">
    <property type="nucleotide sequence ID" value="NC_007404.1"/>
</dbReference>
<dbReference type="SMR" id="Q3SLX9"/>
<dbReference type="STRING" id="292415.Tbd_0320"/>
<dbReference type="KEGG" id="tbd:Tbd_0320"/>
<dbReference type="eggNOG" id="COG0156">
    <property type="taxonomic scope" value="Bacteria"/>
</dbReference>
<dbReference type="HOGENOM" id="CLU_015846_11_2_4"/>
<dbReference type="OrthoDB" id="9807157at2"/>
<dbReference type="UniPathway" id="UPA00078"/>
<dbReference type="Proteomes" id="UP000008291">
    <property type="component" value="Chromosome"/>
</dbReference>
<dbReference type="GO" id="GO:0008710">
    <property type="term" value="F:8-amino-7-oxononanoate synthase activity"/>
    <property type="evidence" value="ECO:0007669"/>
    <property type="project" value="UniProtKB-UniRule"/>
</dbReference>
<dbReference type="GO" id="GO:0030170">
    <property type="term" value="F:pyridoxal phosphate binding"/>
    <property type="evidence" value="ECO:0007669"/>
    <property type="project" value="UniProtKB-UniRule"/>
</dbReference>
<dbReference type="GO" id="GO:0009102">
    <property type="term" value="P:biotin biosynthetic process"/>
    <property type="evidence" value="ECO:0007669"/>
    <property type="project" value="UniProtKB-UniRule"/>
</dbReference>
<dbReference type="Gene3D" id="3.90.1150.10">
    <property type="entry name" value="Aspartate Aminotransferase, domain 1"/>
    <property type="match status" value="1"/>
</dbReference>
<dbReference type="Gene3D" id="3.40.640.10">
    <property type="entry name" value="Type I PLP-dependent aspartate aminotransferase-like (Major domain)"/>
    <property type="match status" value="1"/>
</dbReference>
<dbReference type="HAMAP" id="MF_01693">
    <property type="entry name" value="BioF_aminotrans_2"/>
    <property type="match status" value="1"/>
</dbReference>
<dbReference type="InterPro" id="IPR004839">
    <property type="entry name" value="Aminotransferase_I/II_large"/>
</dbReference>
<dbReference type="InterPro" id="IPR050087">
    <property type="entry name" value="AON_synthase_class-II"/>
</dbReference>
<dbReference type="InterPro" id="IPR004723">
    <property type="entry name" value="AONS_Archaea/Proteobacteria"/>
</dbReference>
<dbReference type="InterPro" id="IPR022834">
    <property type="entry name" value="AONS_Proteobacteria"/>
</dbReference>
<dbReference type="InterPro" id="IPR015424">
    <property type="entry name" value="PyrdxlP-dep_Trfase"/>
</dbReference>
<dbReference type="InterPro" id="IPR015421">
    <property type="entry name" value="PyrdxlP-dep_Trfase_major"/>
</dbReference>
<dbReference type="InterPro" id="IPR015422">
    <property type="entry name" value="PyrdxlP-dep_Trfase_small"/>
</dbReference>
<dbReference type="NCBIfam" id="TIGR00858">
    <property type="entry name" value="bioF"/>
    <property type="match status" value="1"/>
</dbReference>
<dbReference type="PANTHER" id="PTHR13693:SF100">
    <property type="entry name" value="8-AMINO-7-OXONONANOATE SYNTHASE"/>
    <property type="match status" value="1"/>
</dbReference>
<dbReference type="PANTHER" id="PTHR13693">
    <property type="entry name" value="CLASS II AMINOTRANSFERASE/8-AMINO-7-OXONONANOATE SYNTHASE"/>
    <property type="match status" value="1"/>
</dbReference>
<dbReference type="Pfam" id="PF00155">
    <property type="entry name" value="Aminotran_1_2"/>
    <property type="match status" value="1"/>
</dbReference>
<dbReference type="SUPFAM" id="SSF53383">
    <property type="entry name" value="PLP-dependent transferases"/>
    <property type="match status" value="1"/>
</dbReference>
<reference key="1">
    <citation type="journal article" date="2006" name="J. Bacteriol.">
        <title>The genome sequence of the obligately chemolithoautotrophic, facultatively anaerobic bacterium Thiobacillus denitrificans.</title>
        <authorList>
            <person name="Beller H.R."/>
            <person name="Chain P.S."/>
            <person name="Letain T.E."/>
            <person name="Chakicherla A."/>
            <person name="Larimer F.W."/>
            <person name="Richardson P.M."/>
            <person name="Coleman M.A."/>
            <person name="Wood A.P."/>
            <person name="Kelly D.P."/>
        </authorList>
    </citation>
    <scope>NUCLEOTIDE SEQUENCE [LARGE SCALE GENOMIC DNA]</scope>
    <source>
        <strain>ATCC 25259 / T1</strain>
    </source>
</reference>
<proteinExistence type="inferred from homology"/>
<sequence length="386" mass="40712">MTDGALTRLEHGLAALKADHLARRRPLLDGAQGAHVTIDGRRVVSFCSNDYLGLANDPALVAAAHAALDGCGVGAGAAHLISGHHRLHLEFETDFAQWVGKPAALLFSTGYLANLAVVTALISRRGEVFADKLNHASLVDAAKLSGARFSRYRHGDLAQLESRLAASTARDRMIVSDLVFSMDGDVAPVDALLDLAERYDAWLYLDDAHGFGVLNGGRGGLSERARASTRVIYLATLGKAAGVAGASVAADGRVIEWLIQTARPYIYTTAAPPLLAAALRESLRQIAAGAARRGRLQRHVARLRSGLGGLKNAVLADSFTPIQPLIVGANADALTLSQALLQRGILVPAIRTPTVPANTARLRITLSAAHSDADVARLVETVHELA</sequence>
<gene>
    <name evidence="1" type="primary">bioF</name>
    <name type="ordered locus">Tbd_0320</name>
</gene>
<evidence type="ECO:0000255" key="1">
    <source>
        <dbReference type="HAMAP-Rule" id="MF_01693"/>
    </source>
</evidence>
<protein>
    <recommendedName>
        <fullName evidence="1">8-amino-7-oxononanoate synthase</fullName>
        <shortName evidence="1">AONS</shortName>
        <ecNumber evidence="1">2.3.1.47</ecNumber>
    </recommendedName>
    <alternativeName>
        <fullName evidence="1">7-keto-8-amino-pelargonic acid synthase</fullName>
        <shortName evidence="1">7-KAP synthase</shortName>
        <shortName evidence="1">KAPA synthase</shortName>
    </alternativeName>
    <alternativeName>
        <fullName evidence="1">8-amino-7-ketopelargonate synthase</fullName>
    </alternativeName>
</protein>